<reference key="1">
    <citation type="journal article" date="2005" name="J. Bacteriol.">
        <title>Insights on evolution of virulence and resistance from the complete genome analysis of an early methicillin-resistant Staphylococcus aureus strain and a biofilm-producing methicillin-resistant Staphylococcus epidermidis strain.</title>
        <authorList>
            <person name="Gill S.R."/>
            <person name="Fouts D.E."/>
            <person name="Archer G.L."/>
            <person name="Mongodin E.F."/>
            <person name="DeBoy R.T."/>
            <person name="Ravel J."/>
            <person name="Paulsen I.T."/>
            <person name="Kolonay J.F."/>
            <person name="Brinkac L.M."/>
            <person name="Beanan M.J."/>
            <person name="Dodson R.J."/>
            <person name="Daugherty S.C."/>
            <person name="Madupu R."/>
            <person name="Angiuoli S.V."/>
            <person name="Durkin A.S."/>
            <person name="Haft D.H."/>
            <person name="Vamathevan J.J."/>
            <person name="Khouri H."/>
            <person name="Utterback T.R."/>
            <person name="Lee C."/>
            <person name="Dimitrov G."/>
            <person name="Jiang L."/>
            <person name="Qin H."/>
            <person name="Weidman J."/>
            <person name="Tran K."/>
            <person name="Kang K.H."/>
            <person name="Hance I.R."/>
            <person name="Nelson K.E."/>
            <person name="Fraser C.M."/>
        </authorList>
    </citation>
    <scope>NUCLEOTIDE SEQUENCE [LARGE SCALE GENOMIC DNA]</scope>
    <source>
        <strain>ATCC 35984 / DSM 28319 / BCRC 17069 / CCUG 31568 / BM 3577 / RP62A</strain>
    </source>
</reference>
<comment type="function">
    <text evidence="1">Located at the top of the head of the 30S subunit, it contacts several helices of the 16S rRNA. In the 70S ribosome it contacts the 23S rRNA (bridge B1a) and protein L5 of the 50S subunit (bridge B1b), connecting the 2 subunits; these bridges are implicated in subunit movement. Contacts the tRNAs in the A and P-sites.</text>
</comment>
<comment type="subunit">
    <text evidence="1">Part of the 30S ribosomal subunit. Forms a loose heterodimer with protein S19. Forms two bridges to the 50S subunit in the 70S ribosome.</text>
</comment>
<comment type="similarity">
    <text evidence="1">Belongs to the universal ribosomal protein uS13 family.</text>
</comment>
<sequence>MARIAGVDIPREKRIVISLTYVYGIGTSTANKIVEEANVSADTRVKDLTDDELGRIREVVDGYKVEGDLRREQNLNIKRLMEISSYRGIRHRRGLPVRGQKTKNNARTRKGPVKTVANKKK</sequence>
<organism>
    <name type="scientific">Staphylococcus epidermidis (strain ATCC 35984 / DSM 28319 / BCRC 17069 / CCUG 31568 / BM 3577 / RP62A)</name>
    <dbReference type="NCBI Taxonomy" id="176279"/>
    <lineage>
        <taxon>Bacteria</taxon>
        <taxon>Bacillati</taxon>
        <taxon>Bacillota</taxon>
        <taxon>Bacilli</taxon>
        <taxon>Bacillales</taxon>
        <taxon>Staphylococcaceae</taxon>
        <taxon>Staphylococcus</taxon>
    </lineage>
</organism>
<evidence type="ECO:0000255" key="1">
    <source>
        <dbReference type="HAMAP-Rule" id="MF_01315"/>
    </source>
</evidence>
<evidence type="ECO:0000256" key="2">
    <source>
        <dbReference type="SAM" id="MobiDB-lite"/>
    </source>
</evidence>
<evidence type="ECO:0000305" key="3"/>
<proteinExistence type="inferred from homology"/>
<dbReference type="EMBL" id="CP000029">
    <property type="protein sequence ID" value="AAW55123.1"/>
    <property type="molecule type" value="Genomic_DNA"/>
</dbReference>
<dbReference type="RefSeq" id="WP_001829703.1">
    <property type="nucleotide sequence ID" value="NC_002976.3"/>
</dbReference>
<dbReference type="SMR" id="Q5HM23"/>
<dbReference type="STRING" id="176279.SERP1807"/>
<dbReference type="GeneID" id="63934747"/>
<dbReference type="KEGG" id="ser:SERP1807"/>
<dbReference type="eggNOG" id="COG0099">
    <property type="taxonomic scope" value="Bacteria"/>
</dbReference>
<dbReference type="HOGENOM" id="CLU_103849_1_1_9"/>
<dbReference type="Proteomes" id="UP000000531">
    <property type="component" value="Chromosome"/>
</dbReference>
<dbReference type="GO" id="GO:0005829">
    <property type="term" value="C:cytosol"/>
    <property type="evidence" value="ECO:0007669"/>
    <property type="project" value="TreeGrafter"/>
</dbReference>
<dbReference type="GO" id="GO:0015935">
    <property type="term" value="C:small ribosomal subunit"/>
    <property type="evidence" value="ECO:0007669"/>
    <property type="project" value="TreeGrafter"/>
</dbReference>
<dbReference type="GO" id="GO:0019843">
    <property type="term" value="F:rRNA binding"/>
    <property type="evidence" value="ECO:0007669"/>
    <property type="project" value="UniProtKB-UniRule"/>
</dbReference>
<dbReference type="GO" id="GO:0003735">
    <property type="term" value="F:structural constituent of ribosome"/>
    <property type="evidence" value="ECO:0007669"/>
    <property type="project" value="InterPro"/>
</dbReference>
<dbReference type="GO" id="GO:0000049">
    <property type="term" value="F:tRNA binding"/>
    <property type="evidence" value="ECO:0007669"/>
    <property type="project" value="UniProtKB-UniRule"/>
</dbReference>
<dbReference type="GO" id="GO:0006412">
    <property type="term" value="P:translation"/>
    <property type="evidence" value="ECO:0007669"/>
    <property type="project" value="UniProtKB-UniRule"/>
</dbReference>
<dbReference type="FunFam" id="1.10.8.50:FF:000001">
    <property type="entry name" value="30S ribosomal protein S13"/>
    <property type="match status" value="1"/>
</dbReference>
<dbReference type="FunFam" id="4.10.910.10:FF:000001">
    <property type="entry name" value="30S ribosomal protein S13"/>
    <property type="match status" value="1"/>
</dbReference>
<dbReference type="Gene3D" id="1.10.8.50">
    <property type="match status" value="1"/>
</dbReference>
<dbReference type="Gene3D" id="4.10.910.10">
    <property type="entry name" value="30s ribosomal protein s13, domain 2"/>
    <property type="match status" value="1"/>
</dbReference>
<dbReference type="HAMAP" id="MF_01315">
    <property type="entry name" value="Ribosomal_uS13"/>
    <property type="match status" value="1"/>
</dbReference>
<dbReference type="InterPro" id="IPR027437">
    <property type="entry name" value="Rbsml_uS13_C"/>
</dbReference>
<dbReference type="InterPro" id="IPR001892">
    <property type="entry name" value="Ribosomal_uS13"/>
</dbReference>
<dbReference type="InterPro" id="IPR010979">
    <property type="entry name" value="Ribosomal_uS13-like_H2TH"/>
</dbReference>
<dbReference type="InterPro" id="IPR019980">
    <property type="entry name" value="Ribosomal_uS13_bac-type"/>
</dbReference>
<dbReference type="InterPro" id="IPR018269">
    <property type="entry name" value="Ribosomal_uS13_CS"/>
</dbReference>
<dbReference type="NCBIfam" id="TIGR03631">
    <property type="entry name" value="uS13_bact"/>
    <property type="match status" value="1"/>
</dbReference>
<dbReference type="PANTHER" id="PTHR10871">
    <property type="entry name" value="30S RIBOSOMAL PROTEIN S13/40S RIBOSOMAL PROTEIN S18"/>
    <property type="match status" value="1"/>
</dbReference>
<dbReference type="PANTHER" id="PTHR10871:SF1">
    <property type="entry name" value="SMALL RIBOSOMAL SUBUNIT PROTEIN US13M"/>
    <property type="match status" value="1"/>
</dbReference>
<dbReference type="Pfam" id="PF00416">
    <property type="entry name" value="Ribosomal_S13"/>
    <property type="match status" value="1"/>
</dbReference>
<dbReference type="PIRSF" id="PIRSF002134">
    <property type="entry name" value="Ribosomal_S13"/>
    <property type="match status" value="1"/>
</dbReference>
<dbReference type="SUPFAM" id="SSF46946">
    <property type="entry name" value="S13-like H2TH domain"/>
    <property type="match status" value="1"/>
</dbReference>
<dbReference type="PROSITE" id="PS00646">
    <property type="entry name" value="RIBOSOMAL_S13_1"/>
    <property type="match status" value="1"/>
</dbReference>
<dbReference type="PROSITE" id="PS50159">
    <property type="entry name" value="RIBOSOMAL_S13_2"/>
    <property type="match status" value="1"/>
</dbReference>
<feature type="chain" id="PRO_0000132141" description="Small ribosomal subunit protein uS13">
    <location>
        <begin position="1"/>
        <end position="121"/>
    </location>
</feature>
<feature type="region of interest" description="Disordered" evidence="2">
    <location>
        <begin position="91"/>
        <end position="121"/>
    </location>
</feature>
<keyword id="KW-1185">Reference proteome</keyword>
<keyword id="KW-0687">Ribonucleoprotein</keyword>
<keyword id="KW-0689">Ribosomal protein</keyword>
<keyword id="KW-0694">RNA-binding</keyword>
<keyword id="KW-0699">rRNA-binding</keyword>
<keyword id="KW-0820">tRNA-binding</keyword>
<protein>
    <recommendedName>
        <fullName evidence="1">Small ribosomal subunit protein uS13</fullName>
    </recommendedName>
    <alternativeName>
        <fullName evidence="3">30S ribosomal protein S13</fullName>
    </alternativeName>
</protein>
<gene>
    <name evidence="1" type="primary">rpsM</name>
    <name type="ordered locus">SERP1807</name>
</gene>
<name>RS13_STAEQ</name>
<accession>Q5HM23</accession>